<evidence type="ECO:0000250" key="1"/>
<evidence type="ECO:0000255" key="2"/>
<evidence type="ECO:0000256" key="3">
    <source>
        <dbReference type="SAM" id="MobiDB-lite"/>
    </source>
</evidence>
<evidence type="ECO:0000303" key="4">
    <source ref="4"/>
</evidence>
<evidence type="ECO:0000305" key="5"/>
<evidence type="ECO:0007829" key="6">
    <source>
        <dbReference type="PDB" id="6CWS"/>
    </source>
</evidence>
<feature type="signal peptide" evidence="2">
    <location>
        <begin position="1"/>
        <end position="19"/>
    </location>
</feature>
<feature type="chain" id="PRO_0000005242" description="C-C motif chemokine 28">
    <location>
        <begin position="20"/>
        <end position="127"/>
    </location>
</feature>
<feature type="region of interest" description="Disordered" evidence="3">
    <location>
        <begin position="92"/>
        <end position="127"/>
    </location>
</feature>
<feature type="compositionally biased region" description="Basic residues" evidence="3">
    <location>
        <begin position="92"/>
        <end position="115"/>
    </location>
</feature>
<feature type="compositionally biased region" description="Basic and acidic residues" evidence="3">
    <location>
        <begin position="116"/>
        <end position="127"/>
    </location>
</feature>
<feature type="glycosylation site" description="N-linked (GlcNAc...) asparagine" evidence="2">
    <location>
        <position position="78"/>
    </location>
</feature>
<feature type="disulfide bond" evidence="1">
    <location>
        <begin position="30"/>
        <end position="58"/>
    </location>
</feature>
<feature type="disulfide bond" evidence="1">
    <location>
        <begin position="31"/>
        <end position="73"/>
    </location>
</feature>
<feature type="splice variant" id="VSP_047735" description="In isoform 2." evidence="4">
    <original>ILHVKRRRICVSPHNHTVKQWMKVQAAKKNGKGNVCHRKKHHGKRNSNRAHQGKHETYGHKTPY</original>
    <variation>MLECSDMISAHYNLHLPGSNDSPTSAFQVAGITAFMSSAEESVSARTTILLSSG</variation>
    <location>
        <begin position="64"/>
        <end position="127"/>
    </location>
</feature>
<feature type="turn" evidence="6">
    <location>
        <begin position="22"/>
        <end position="25"/>
    </location>
</feature>
<feature type="strand" evidence="6">
    <location>
        <begin position="27"/>
        <end position="30"/>
    </location>
</feature>
<feature type="helix" evidence="6">
    <location>
        <begin position="40"/>
        <end position="43"/>
    </location>
</feature>
<feature type="strand" evidence="6">
    <location>
        <begin position="46"/>
        <end position="52"/>
    </location>
</feature>
<feature type="turn" evidence="6">
    <location>
        <begin position="54"/>
        <end position="57"/>
    </location>
</feature>
<feature type="strand" evidence="6">
    <location>
        <begin position="62"/>
        <end position="69"/>
    </location>
</feature>
<feature type="strand" evidence="6">
    <location>
        <begin position="71"/>
        <end position="74"/>
    </location>
</feature>
<feature type="helix" evidence="6">
    <location>
        <begin position="79"/>
        <end position="89"/>
    </location>
</feature>
<feature type="strand" evidence="6">
    <location>
        <begin position="103"/>
        <end position="106"/>
    </location>
</feature>
<gene>
    <name type="primary">CCL28</name>
    <name type="synonym">SCYA28</name>
</gene>
<protein>
    <recommendedName>
        <fullName>C-C motif chemokine 28</fullName>
    </recommendedName>
    <alternativeName>
        <fullName>Mucosae-associated epithelial chemokine</fullName>
        <shortName>MEC</shortName>
    </alternativeName>
    <alternativeName>
        <fullName>Protein CCK1</fullName>
    </alternativeName>
    <alternativeName>
        <fullName>Small-inducible cytokine A28</fullName>
    </alternativeName>
</protein>
<keyword id="KW-0002">3D-structure</keyword>
<keyword id="KW-0025">Alternative splicing</keyword>
<keyword id="KW-0145">Chemotaxis</keyword>
<keyword id="KW-0202">Cytokine</keyword>
<keyword id="KW-1015">Disulfide bond</keyword>
<keyword id="KW-0325">Glycoprotein</keyword>
<keyword id="KW-1267">Proteomics identification</keyword>
<keyword id="KW-1185">Reference proteome</keyword>
<keyword id="KW-0964">Secreted</keyword>
<keyword id="KW-0732">Signal</keyword>
<name>CCL28_HUMAN</name>
<proteinExistence type="evidence at protein level"/>
<comment type="function">
    <text>Chemotactic activity for resting CD4, CD8 T-cells and eosinophils. Binds to CCR3 and CCR10 and induces calcium mobilization in a dose-dependent manner.</text>
</comment>
<comment type="interaction">
    <interactant intactId="EBI-7783254">
        <id>Q9NRJ3</id>
    </interactant>
    <interactant intactId="EBI-727357">
        <id>P51671</id>
        <label>CCL11</label>
    </interactant>
    <organismsDiffer>false</organismsDiffer>
    <experiments>2</experiments>
</comment>
<comment type="interaction">
    <interactant intactId="EBI-7783254">
        <id>Q9NRJ3</id>
    </interactant>
    <interactant intactId="EBI-16640146">
        <id>Q92583</id>
        <label>CCL17</label>
    </interactant>
    <organismsDiffer>false</organismsDiffer>
    <experiments>3</experiments>
</comment>
<comment type="interaction">
    <interactant intactId="EBI-7783254">
        <id>Q9NRJ3</id>
    </interactant>
    <interactant intactId="EBI-953695">
        <id>O00585</id>
        <label>CCL21</label>
    </interactant>
    <organismsDiffer>false</organismsDiffer>
    <experiments>2</experiments>
</comment>
<comment type="interaction">
    <interactant intactId="EBI-7783254">
        <id>Q9NRJ3</id>
    </interactant>
    <interactant intactId="EBI-7783416">
        <id>Q9Y258</id>
        <label>CCL26</label>
    </interactant>
    <organismsDiffer>false</organismsDiffer>
    <experiments>2</experiments>
</comment>
<comment type="interaction">
    <interactant intactId="EBI-7783254">
        <id>Q9NRJ3</id>
    </interactant>
    <interactant intactId="EBI-2848366">
        <id>P13501</id>
        <label>CCL5</label>
    </interactant>
    <organismsDiffer>false</organismsDiffer>
    <experiments>2</experiments>
</comment>
<comment type="interaction">
    <interactant intactId="EBI-7783254">
        <id>Q9NRJ3</id>
    </interactant>
    <interactant intactId="EBI-7815386">
        <id>P02778</id>
        <label>CXCL10</label>
    </interactant>
    <organismsDiffer>false</organismsDiffer>
    <experiments>2</experiments>
</comment>
<comment type="interaction">
    <interactant intactId="EBI-7783254">
        <id>Q9NRJ3</id>
    </interactant>
    <interactant intactId="EBI-3913254">
        <id>P48061</id>
        <label>CXCL12</label>
    </interactant>
    <organismsDiffer>false</organismsDiffer>
    <experiments>2</experiments>
</comment>
<comment type="interaction">
    <interactant intactId="EBI-7783254">
        <id>Q9NRJ3</id>
    </interactant>
    <interactant intactId="EBI-748248">
        <id>Q8WTU0</id>
        <label>DDI1</label>
    </interactant>
    <organismsDiffer>false</organismsDiffer>
    <experiments>10</experiments>
</comment>
<comment type="interaction">
    <interactant intactId="EBI-7783254">
        <id>Q9NRJ3</id>
    </interactant>
    <interactant intactId="EBI-743027">
        <id>P51808</id>
        <label>DYNLT3</label>
    </interactant>
    <organismsDiffer>false</organismsDiffer>
    <experiments>3</experiments>
</comment>
<comment type="interaction">
    <interactant intactId="EBI-7783254">
        <id>Q9NRJ3</id>
    </interactant>
    <interactant intactId="EBI-2565740">
        <id>P02776</id>
        <label>PF4</label>
    </interactant>
    <organismsDiffer>false</organismsDiffer>
    <experiments>3</experiments>
</comment>
<comment type="interaction">
    <interactant intactId="EBI-7783254">
        <id>Q9NRJ3</id>
    </interactant>
    <interactant intactId="EBI-348380">
        <id>P25788</id>
        <label>PSMA3</label>
    </interactant>
    <organismsDiffer>false</organismsDiffer>
    <experiments>3</experiments>
</comment>
<comment type="interaction">
    <interactant intactId="EBI-7783254">
        <id>Q9NRJ3</id>
    </interactant>
    <interactant intactId="EBI-357085">
        <id>Q9UNE7</id>
        <label>STUB1</label>
    </interactant>
    <organismsDiffer>false</organismsDiffer>
    <experiments>3</experiments>
</comment>
<comment type="interaction">
    <interactant intactId="EBI-7783254">
        <id>Q9NRJ3</id>
    </interactant>
    <interactant intactId="EBI-12806590">
        <id>Q86WV8</id>
        <label>TSC1</label>
    </interactant>
    <organismsDiffer>false</organismsDiffer>
    <experiments>3</experiments>
</comment>
<comment type="subcellular location">
    <subcellularLocation>
        <location>Secreted</location>
    </subcellularLocation>
</comment>
<comment type="alternative products">
    <event type="alternative splicing"/>
    <isoform>
        <id>Q9NRJ3-1</id>
        <name>1</name>
        <sequence type="displayed"/>
    </isoform>
    <isoform>
        <id>Q9NRJ3-2</id>
        <name>2</name>
        <name>CCL28chi</name>
        <sequence type="described" ref="VSP_047735"/>
    </isoform>
</comment>
<comment type="tissue specificity">
    <text>Preferentially expressed by epithelial cells of diverse tissues including normal and pathological colon, salivary gland, mammary gland, trachea and rectum. Also found in prostate, spleen, thyroid, psoriasis skin and in lower levels in peripheral blood leukocytes, small intestine, Peyer patches, stomach and normal skin.</text>
</comment>
<comment type="similarity">
    <text evidence="5">Belongs to the intercrine beta (chemokine CC) family.</text>
</comment>
<comment type="online information" name="Wikipedia">
    <link uri="https://en.wikipedia.org/wiki/CCL28"/>
    <text>CCL28 entry</text>
</comment>
<reference key="1">
    <citation type="journal article" date="2000" name="J. Biol. Chem.">
        <title>Identification of a novel chemokine (CCL28), which binds CCR10 (GPR2).</title>
        <authorList>
            <person name="Wang W."/>
            <person name="Soto H."/>
            <person name="Oldham E.R."/>
            <person name="Buchanan M.E."/>
            <person name="Homey B."/>
            <person name="Catron D."/>
            <person name="Jenkins N."/>
            <person name="Copeland N.G."/>
            <person name="Gilbert D.J."/>
            <person name="Nguyen N."/>
            <person name="Abrams J."/>
            <person name="Kershenovich D."/>
            <person name="Smith K."/>
            <person name="McClanahan T."/>
            <person name="Vicari A.P."/>
            <person name="Zlotnik A."/>
        </authorList>
    </citation>
    <scope>NUCLEOTIDE SEQUENCE [MRNA] (ISOFORM 1)</scope>
    <scope>RECEPTOR INTERACTION</scope>
    <source>
        <tissue>Fetal heart</tissue>
        <tissue>Osteoblast</tissue>
    </source>
</reference>
<reference key="2">
    <citation type="journal article" date="2000" name="J. Immunol.">
        <title>A novel chemokine ligand for CCR10 and CCR3 expressed by epithelial cells in mucosal tissues.</title>
        <authorList>
            <person name="Pan J."/>
            <person name="Kunkel E.J."/>
            <person name="Gosslar U."/>
            <person name="Lazarus N."/>
            <person name="Langdon P."/>
            <person name="Broadwell K."/>
            <person name="Vierra M.A."/>
            <person name="Genovese M.C."/>
            <person name="Butcher E.C."/>
            <person name="Soler D."/>
        </authorList>
    </citation>
    <scope>NUCLEOTIDE SEQUENCE [MRNA] (ISOFORM 1)</scope>
    <scope>RECEPTOR INTERACTION</scope>
</reference>
<reference key="3">
    <citation type="submission" date="1998-12" db="EMBL/GenBank/DDBJ databases">
        <title>A novel CC chemokine homology with TECK.</title>
        <authorList>
            <person name="Zhang W."/>
            <person name="He L."/>
            <person name="Yuan Z."/>
            <person name="Wan T."/>
            <person name="Cao X."/>
        </authorList>
    </citation>
    <scope>NUCLEOTIDE SEQUENCE [MRNA] (ISOFORM 1)</scope>
</reference>
<reference key="4">
    <citation type="submission" date="2010-04" db="EMBL/GenBank/DDBJ databases">
        <title>Prediction and identification of a novel CCL28 splice variant CCL28chi.</title>
        <authorList>
            <person name="Scanlon K.M."/>
            <person name="Mahon B.P."/>
        </authorList>
    </citation>
    <scope>NUCLEOTIDE SEQUENCE [MRNA] (ISOFORM 2)</scope>
    <scope>ALTERNATIVE SPLICING</scope>
</reference>
<reference key="5">
    <citation type="journal article" date="2004" name="Nature">
        <title>The DNA sequence and comparative analysis of human chromosome 5.</title>
        <authorList>
            <person name="Schmutz J."/>
            <person name="Martin J."/>
            <person name="Terry A."/>
            <person name="Couronne O."/>
            <person name="Grimwood J."/>
            <person name="Lowry S."/>
            <person name="Gordon L.A."/>
            <person name="Scott D."/>
            <person name="Xie G."/>
            <person name="Huang W."/>
            <person name="Hellsten U."/>
            <person name="Tran-Gyamfi M."/>
            <person name="She X."/>
            <person name="Prabhakar S."/>
            <person name="Aerts A."/>
            <person name="Altherr M."/>
            <person name="Bajorek E."/>
            <person name="Black S."/>
            <person name="Branscomb E."/>
            <person name="Caoile C."/>
            <person name="Challacombe J.F."/>
            <person name="Chan Y.M."/>
            <person name="Denys M."/>
            <person name="Detter J.C."/>
            <person name="Escobar J."/>
            <person name="Flowers D."/>
            <person name="Fotopulos D."/>
            <person name="Glavina T."/>
            <person name="Gomez M."/>
            <person name="Gonzales E."/>
            <person name="Goodstein D."/>
            <person name="Grigoriev I."/>
            <person name="Groza M."/>
            <person name="Hammon N."/>
            <person name="Hawkins T."/>
            <person name="Haydu L."/>
            <person name="Israni S."/>
            <person name="Jett J."/>
            <person name="Kadner K."/>
            <person name="Kimball H."/>
            <person name="Kobayashi A."/>
            <person name="Lopez F."/>
            <person name="Lou Y."/>
            <person name="Martinez D."/>
            <person name="Medina C."/>
            <person name="Morgan J."/>
            <person name="Nandkeshwar R."/>
            <person name="Noonan J.P."/>
            <person name="Pitluck S."/>
            <person name="Pollard M."/>
            <person name="Predki P."/>
            <person name="Priest J."/>
            <person name="Ramirez L."/>
            <person name="Retterer J."/>
            <person name="Rodriguez A."/>
            <person name="Rogers S."/>
            <person name="Salamov A."/>
            <person name="Salazar A."/>
            <person name="Thayer N."/>
            <person name="Tice H."/>
            <person name="Tsai M."/>
            <person name="Ustaszewska A."/>
            <person name="Vo N."/>
            <person name="Wheeler J."/>
            <person name="Wu K."/>
            <person name="Yang J."/>
            <person name="Dickson M."/>
            <person name="Cheng J.-F."/>
            <person name="Eichler E.E."/>
            <person name="Olsen A."/>
            <person name="Pennacchio L.A."/>
            <person name="Rokhsar D.S."/>
            <person name="Richardson P."/>
            <person name="Lucas S.M."/>
            <person name="Myers R.M."/>
            <person name="Rubin E.M."/>
        </authorList>
    </citation>
    <scope>NUCLEOTIDE SEQUENCE [LARGE SCALE GENOMIC DNA]</scope>
</reference>
<reference key="6">
    <citation type="journal article" date="2004" name="Genome Res.">
        <title>The status, quality, and expansion of the NIH full-length cDNA project: the Mammalian Gene Collection (MGC).</title>
        <authorList>
            <consortium name="The MGC Project Team"/>
        </authorList>
    </citation>
    <scope>NUCLEOTIDE SEQUENCE [LARGE SCALE MRNA] (ISOFORM 1)</scope>
</reference>
<dbReference type="EMBL" id="AF220210">
    <property type="protein sequence ID" value="AAF87205.1"/>
    <property type="molecule type" value="mRNA"/>
</dbReference>
<dbReference type="EMBL" id="AF266504">
    <property type="protein sequence ID" value="AAG16691.1"/>
    <property type="molecule type" value="mRNA"/>
</dbReference>
<dbReference type="EMBL" id="AF110384">
    <property type="protein sequence ID" value="AAG43193.1"/>
    <property type="molecule type" value="mRNA"/>
</dbReference>
<dbReference type="EMBL" id="HM067700">
    <property type="protein sequence ID" value="ADH95184.1"/>
    <property type="molecule type" value="mRNA"/>
</dbReference>
<dbReference type="EMBL" id="AC025457">
    <property type="status" value="NOT_ANNOTATED_CDS"/>
    <property type="molecule type" value="Genomic_DNA"/>
</dbReference>
<dbReference type="EMBL" id="BC062668">
    <property type="protein sequence ID" value="AAH62668.1"/>
    <property type="molecule type" value="mRNA"/>
</dbReference>
<dbReference type="EMBL" id="BC069532">
    <property type="protein sequence ID" value="AAH69532.1"/>
    <property type="molecule type" value="mRNA"/>
</dbReference>
<dbReference type="CCDS" id="CCDS3944.1">
    <molecule id="Q9NRJ3-1"/>
</dbReference>
<dbReference type="RefSeq" id="NP_001288802.1">
    <molecule id="Q9NRJ3-1"/>
    <property type="nucleotide sequence ID" value="NM_001301873.2"/>
</dbReference>
<dbReference type="RefSeq" id="NP_001288803.1">
    <molecule id="Q9NRJ3-1"/>
    <property type="nucleotide sequence ID" value="NM_001301874.2"/>
</dbReference>
<dbReference type="RefSeq" id="NP_683513.1">
    <molecule id="Q9NRJ3-1"/>
    <property type="nucleotide sequence ID" value="NM_148672.3"/>
</dbReference>
<dbReference type="PDB" id="6CWS">
    <property type="method" value="NMR"/>
    <property type="chains" value="A=20-127"/>
</dbReference>
<dbReference type="PDBsum" id="6CWS"/>
<dbReference type="BMRB" id="Q9NRJ3"/>
<dbReference type="SMR" id="Q9NRJ3"/>
<dbReference type="BioGRID" id="121147">
    <property type="interactions" value="23"/>
</dbReference>
<dbReference type="DIP" id="DIP-57392N"/>
<dbReference type="FunCoup" id="Q9NRJ3">
    <property type="interactions" value="614"/>
</dbReference>
<dbReference type="IntAct" id="Q9NRJ3">
    <property type="interactions" value="26"/>
</dbReference>
<dbReference type="MINT" id="Q9NRJ3"/>
<dbReference type="STRING" id="9606.ENSP00000354416"/>
<dbReference type="GlyCosmos" id="Q9NRJ3">
    <property type="glycosylation" value="1 site, No reported glycans"/>
</dbReference>
<dbReference type="GlyGen" id="Q9NRJ3">
    <property type="glycosylation" value="1 site"/>
</dbReference>
<dbReference type="iPTMnet" id="Q9NRJ3"/>
<dbReference type="PhosphoSitePlus" id="Q9NRJ3"/>
<dbReference type="BioMuta" id="CCL28"/>
<dbReference type="DMDM" id="12230650"/>
<dbReference type="jPOST" id="Q9NRJ3"/>
<dbReference type="MassIVE" id="Q9NRJ3"/>
<dbReference type="PaxDb" id="9606-ENSP00000354416"/>
<dbReference type="PeptideAtlas" id="Q9NRJ3"/>
<dbReference type="ProteomicsDB" id="15169"/>
<dbReference type="ProteomicsDB" id="82377">
    <molecule id="Q9NRJ3-1"/>
</dbReference>
<dbReference type="Pumba" id="Q9NRJ3"/>
<dbReference type="Antibodypedia" id="23245">
    <property type="antibodies" value="352 antibodies from 31 providers"/>
</dbReference>
<dbReference type="DNASU" id="56477"/>
<dbReference type="Ensembl" id="ENST00000361115.4">
    <molecule id="Q9NRJ3-1"/>
    <property type="protein sequence ID" value="ENSP00000354416.4"/>
    <property type="gene ID" value="ENSG00000151882.11"/>
</dbReference>
<dbReference type="Ensembl" id="ENST00000489442.5">
    <molecule id="Q9NRJ3-1"/>
    <property type="protein sequence ID" value="ENSP00000426424.1"/>
    <property type="gene ID" value="ENSG00000151882.11"/>
</dbReference>
<dbReference type="GeneID" id="56477"/>
<dbReference type="KEGG" id="hsa:56477"/>
<dbReference type="MANE-Select" id="ENST00000361115.4">
    <property type="protein sequence ID" value="ENSP00000354416.4"/>
    <property type="RefSeq nucleotide sequence ID" value="NM_148672.3"/>
    <property type="RefSeq protein sequence ID" value="NP_683513.1"/>
</dbReference>
<dbReference type="UCSC" id="uc003jnu.4">
    <molecule id="Q9NRJ3-1"/>
    <property type="organism name" value="human"/>
</dbReference>
<dbReference type="AGR" id="HGNC:17700"/>
<dbReference type="CTD" id="56477"/>
<dbReference type="DisGeNET" id="56477"/>
<dbReference type="GeneCards" id="CCL28"/>
<dbReference type="HGNC" id="HGNC:17700">
    <property type="gene designation" value="CCL28"/>
</dbReference>
<dbReference type="HPA" id="ENSG00000151882">
    <property type="expression patterns" value="Tissue enriched (salivary)"/>
</dbReference>
<dbReference type="MIM" id="605240">
    <property type="type" value="gene"/>
</dbReference>
<dbReference type="neXtProt" id="NX_Q9NRJ3"/>
<dbReference type="OpenTargets" id="ENSG00000151882"/>
<dbReference type="PharmGKB" id="PA38463"/>
<dbReference type="VEuPathDB" id="HostDB:ENSG00000151882"/>
<dbReference type="eggNOG" id="ENOG502SVUE">
    <property type="taxonomic scope" value="Eukaryota"/>
</dbReference>
<dbReference type="GeneTree" id="ENSGT00530000063923"/>
<dbReference type="HOGENOM" id="CLU_2003113_0_0_1"/>
<dbReference type="InParanoid" id="Q9NRJ3"/>
<dbReference type="OMA" id="ICVSPHS"/>
<dbReference type="OrthoDB" id="8905061at2759"/>
<dbReference type="PAN-GO" id="Q9NRJ3">
    <property type="GO annotations" value="4 GO annotations based on evolutionary models"/>
</dbReference>
<dbReference type="PhylomeDB" id="Q9NRJ3"/>
<dbReference type="TreeFam" id="TF337014"/>
<dbReference type="PathwayCommons" id="Q9NRJ3"/>
<dbReference type="Reactome" id="R-HSA-380108">
    <property type="pathway name" value="Chemokine receptors bind chemokines"/>
</dbReference>
<dbReference type="Reactome" id="R-HSA-418594">
    <property type="pathway name" value="G alpha (i) signalling events"/>
</dbReference>
<dbReference type="SignaLink" id="Q9NRJ3"/>
<dbReference type="BioGRID-ORCS" id="56477">
    <property type="hits" value="13 hits in 1147 CRISPR screens"/>
</dbReference>
<dbReference type="ChiTaRS" id="CCL28">
    <property type="organism name" value="human"/>
</dbReference>
<dbReference type="GenomeRNAi" id="56477"/>
<dbReference type="Pharos" id="Q9NRJ3">
    <property type="development level" value="Tbio"/>
</dbReference>
<dbReference type="PRO" id="PR:Q9NRJ3"/>
<dbReference type="Proteomes" id="UP000005640">
    <property type="component" value="Chromosome 5"/>
</dbReference>
<dbReference type="RNAct" id="Q9NRJ3">
    <property type="molecule type" value="protein"/>
</dbReference>
<dbReference type="Bgee" id="ENSG00000151882">
    <property type="expression patterns" value="Expressed in parotid gland and 138 other cell types or tissues"/>
</dbReference>
<dbReference type="ExpressionAtlas" id="Q9NRJ3">
    <property type="expression patterns" value="baseline and differential"/>
</dbReference>
<dbReference type="GO" id="GO:0070062">
    <property type="term" value="C:extracellular exosome"/>
    <property type="evidence" value="ECO:0007005"/>
    <property type="project" value="UniProtKB"/>
</dbReference>
<dbReference type="GO" id="GO:0005576">
    <property type="term" value="C:extracellular region"/>
    <property type="evidence" value="ECO:0000304"/>
    <property type="project" value="Reactome"/>
</dbReference>
<dbReference type="GO" id="GO:0005615">
    <property type="term" value="C:extracellular space"/>
    <property type="evidence" value="ECO:0000318"/>
    <property type="project" value="GO_Central"/>
</dbReference>
<dbReference type="GO" id="GO:0008009">
    <property type="term" value="F:chemokine activity"/>
    <property type="evidence" value="ECO:0000314"/>
    <property type="project" value="UniProtKB"/>
</dbReference>
<dbReference type="GO" id="GO:0045236">
    <property type="term" value="F:CXCR chemokine receptor binding"/>
    <property type="evidence" value="ECO:0000318"/>
    <property type="project" value="GO_Central"/>
</dbReference>
<dbReference type="GO" id="GO:0061844">
    <property type="term" value="P:antimicrobial humoral immune response mediated by antimicrobial peptide"/>
    <property type="evidence" value="ECO:0000318"/>
    <property type="project" value="GO_Central"/>
</dbReference>
<dbReference type="GO" id="GO:0060326">
    <property type="term" value="P:cell chemotaxis"/>
    <property type="evidence" value="ECO:0000314"/>
    <property type="project" value="UniProtKB"/>
</dbReference>
<dbReference type="GO" id="GO:0071222">
    <property type="term" value="P:cellular response to lipopolysaccharide"/>
    <property type="evidence" value="ECO:0000318"/>
    <property type="project" value="GO_Central"/>
</dbReference>
<dbReference type="GO" id="GO:0006935">
    <property type="term" value="P:chemotaxis"/>
    <property type="evidence" value="ECO:0000304"/>
    <property type="project" value="UniProtKB"/>
</dbReference>
<dbReference type="GO" id="GO:0006954">
    <property type="term" value="P:inflammatory response"/>
    <property type="evidence" value="ECO:0000318"/>
    <property type="project" value="GO_Central"/>
</dbReference>
<dbReference type="GO" id="GO:1903237">
    <property type="term" value="P:negative regulation of leukocyte tethering or rolling"/>
    <property type="evidence" value="ECO:0000314"/>
    <property type="project" value="UniProtKB"/>
</dbReference>
<dbReference type="GO" id="GO:0030593">
    <property type="term" value="P:neutrophil chemotaxis"/>
    <property type="evidence" value="ECO:0000318"/>
    <property type="project" value="GO_Central"/>
</dbReference>
<dbReference type="GO" id="GO:0001954">
    <property type="term" value="P:positive regulation of cell-matrix adhesion"/>
    <property type="evidence" value="ECO:0000314"/>
    <property type="project" value="UniProtKB"/>
</dbReference>
<dbReference type="GO" id="GO:0007204">
    <property type="term" value="P:positive regulation of cytosolic calcium ion concentration"/>
    <property type="evidence" value="ECO:0007669"/>
    <property type="project" value="Ensembl"/>
</dbReference>
<dbReference type="GO" id="GO:0007584">
    <property type="term" value="P:response to nutrient"/>
    <property type="evidence" value="ECO:0007669"/>
    <property type="project" value="Ensembl"/>
</dbReference>
<dbReference type="DisProt" id="DP02010"/>
<dbReference type="FunFam" id="2.40.50.40:FF:000019">
    <property type="entry name" value="C-C motif chemokine 27"/>
    <property type="match status" value="1"/>
</dbReference>
<dbReference type="Gene3D" id="2.40.50.40">
    <property type="match status" value="1"/>
</dbReference>
<dbReference type="InterPro" id="IPR039809">
    <property type="entry name" value="Chemokine_b/g/d"/>
</dbReference>
<dbReference type="InterPro" id="IPR000827">
    <property type="entry name" value="Chemokine_CC_CS"/>
</dbReference>
<dbReference type="InterPro" id="IPR001811">
    <property type="entry name" value="Chemokine_IL8-like_dom"/>
</dbReference>
<dbReference type="InterPro" id="IPR036048">
    <property type="entry name" value="Interleukin_8-like_sf"/>
</dbReference>
<dbReference type="PANTHER" id="PTHR12015:SF205">
    <property type="entry name" value="C-C MOTIF CHEMOKINE 28"/>
    <property type="match status" value="1"/>
</dbReference>
<dbReference type="PANTHER" id="PTHR12015">
    <property type="entry name" value="SMALL INDUCIBLE CYTOKINE A"/>
    <property type="match status" value="1"/>
</dbReference>
<dbReference type="Pfam" id="PF00048">
    <property type="entry name" value="IL8"/>
    <property type="match status" value="1"/>
</dbReference>
<dbReference type="SUPFAM" id="SSF54117">
    <property type="entry name" value="Interleukin 8-like chemokines"/>
    <property type="match status" value="1"/>
</dbReference>
<dbReference type="PROSITE" id="PS00472">
    <property type="entry name" value="SMALL_CYTOKINES_CC"/>
    <property type="match status" value="1"/>
</dbReference>
<organism>
    <name type="scientific">Homo sapiens</name>
    <name type="common">Human</name>
    <dbReference type="NCBI Taxonomy" id="9606"/>
    <lineage>
        <taxon>Eukaryota</taxon>
        <taxon>Metazoa</taxon>
        <taxon>Chordata</taxon>
        <taxon>Craniata</taxon>
        <taxon>Vertebrata</taxon>
        <taxon>Euteleostomi</taxon>
        <taxon>Mammalia</taxon>
        <taxon>Eutheria</taxon>
        <taxon>Euarchontoglires</taxon>
        <taxon>Primates</taxon>
        <taxon>Haplorrhini</taxon>
        <taxon>Catarrhini</taxon>
        <taxon>Hominidae</taxon>
        <taxon>Homo</taxon>
    </lineage>
</organism>
<sequence length="127" mass="14280">MQQRGLAIVALAVCAALHASEAILPIASSCCTEVSHHISRRLLERVNMCRIQRADGDCDLAAVILHVKRRRICVSPHNHTVKQWMKVQAAKKNGKGNVCHRKKHHGKRNSNRAHQGKHETYGHKTPY</sequence>
<accession>Q9NRJ3</accession>
<accession>D7RIE7</accession>